<dbReference type="EMBL" id="J01917">
    <property type="protein sequence ID" value="AAA92221.1"/>
    <property type="molecule type" value="Genomic_DNA"/>
</dbReference>
<dbReference type="PIR" id="A03821">
    <property type="entry name" value="Q6ADE"/>
</dbReference>
<dbReference type="RefSeq" id="AP_000184.1">
    <property type="nucleotide sequence ID" value="AC_000007.1"/>
</dbReference>
<dbReference type="RefSeq" id="NP_040531.1">
    <property type="nucleotide sequence ID" value="NC_001405.1"/>
</dbReference>
<dbReference type="SMR" id="P68978"/>
<dbReference type="ELM" id="P68978"/>
<dbReference type="IntAct" id="P68978">
    <property type="interactions" value="8"/>
</dbReference>
<dbReference type="MINT" id="P68978"/>
<dbReference type="GeneID" id="2652987"/>
<dbReference type="KEGG" id="vg:2652987"/>
<dbReference type="Proteomes" id="UP000008167">
    <property type="component" value="Segment"/>
</dbReference>
<dbReference type="GO" id="GO:0044167">
    <property type="term" value="C:host cell endoplasmic reticulum membrane"/>
    <property type="evidence" value="ECO:0007669"/>
    <property type="project" value="UniProtKB-SubCell"/>
</dbReference>
<dbReference type="GO" id="GO:0016020">
    <property type="term" value="C:membrane"/>
    <property type="evidence" value="ECO:0007669"/>
    <property type="project" value="UniProtKB-KW"/>
</dbReference>
<dbReference type="GO" id="GO:0005537">
    <property type="term" value="F:D-mannose binding"/>
    <property type="evidence" value="ECO:0007669"/>
    <property type="project" value="UniProtKB-KW"/>
</dbReference>
<dbReference type="GO" id="GO:0046776">
    <property type="term" value="P:symbiont-mediated suppression of host antigen processing and presentation of peptide antigen via MHC class I"/>
    <property type="evidence" value="ECO:0007669"/>
    <property type="project" value="UniProtKB-KW"/>
</dbReference>
<dbReference type="FunFam" id="2.60.40.3530:FF:000002">
    <property type="entry name" value="Early E3 18.5 kDa glycoprotein"/>
    <property type="match status" value="1"/>
</dbReference>
<dbReference type="Gene3D" id="2.60.40.3530">
    <property type="match status" value="1"/>
</dbReference>
<dbReference type="InterPro" id="IPR006965">
    <property type="entry name" value="Adenovirus_Gp19K"/>
</dbReference>
<dbReference type="InterPro" id="IPR038710">
    <property type="entry name" value="Adenovirus_Gp19K_sf"/>
</dbReference>
<dbReference type="Pfam" id="PF04881">
    <property type="entry name" value="Adeno_GP19K"/>
    <property type="match status" value="1"/>
</dbReference>
<protein>
    <recommendedName>
        <fullName>Early E3 18.5 kDa glycoprotein</fullName>
    </recommendedName>
    <alternativeName>
        <fullName>E3-19K</fullName>
    </alternativeName>
    <alternativeName>
        <fullName>E3gp 19 kDa</fullName>
        <shortName>E19</shortName>
    </alternativeName>
    <alternativeName>
        <fullName>GP19K</fullName>
    </alternativeName>
</protein>
<comment type="function">
    <text evidence="1">Binds and retains class I heavy chains in the endoplasmic reticulum during the early period of virus infection, thereby impairing their transport to the cell surface. Also delays the expression of class I alleles that it cannot affect by direct retention. Binds transporters associated with antigen processing (TAP) and acts as a tapasin inhibitor, preventing class I/TAP association. In consequence, infected cells are masked for immune recognition by cytotoxic T-lymphocytes (By similarity).</text>
</comment>
<comment type="interaction">
    <interactant intactId="EBI-4407041">
        <id>P68978</id>
    </interactant>
    <interactant intactId="EBI-8503699">
        <id>Q96WV5</id>
        <label>SPBPJ4664.04</label>
    </interactant>
    <organismsDiffer>true</organismsDiffer>
    <experiments>2</experiments>
</comment>
<comment type="subcellular location">
    <subcellularLocation>
        <location>Host endoplasmic reticulum membrane</location>
        <topology>Single-pass type I membrane protein</topology>
    </subcellularLocation>
</comment>
<comment type="developmental stage">
    <text>Expressed at early period of virus infection.</text>
</comment>
<comment type="domain">
    <text>The lumenal domain binds directly to the peptide-binding domain of class I molecules.</text>
</comment>
<comment type="domain">
    <text>The di-lysine motif confers endoplasmic reticulum localization for type I membrane proteins.</text>
</comment>
<comment type="PTM">
    <text>Both disulfide bonds are absolutely critical for the interaction with MHC antigens.</text>
</comment>
<comment type="PTM">
    <text evidence="3">N-glycosylated; high-mannose.</text>
</comment>
<comment type="similarity">
    <text evidence="5">Belongs to the adenoviridae E19 family.</text>
</comment>
<evidence type="ECO:0000250" key="1"/>
<evidence type="ECO:0000255" key="2"/>
<evidence type="ECO:0000269" key="3">
    <source>
    </source>
</evidence>
<evidence type="ECO:0000269" key="4">
    <source>
    </source>
</evidence>
<evidence type="ECO:0000305" key="5"/>
<accession>P68978</accession>
<accession>P03251</accession>
<organismHost>
    <name type="scientific">Homo sapiens</name>
    <name type="common">Human</name>
    <dbReference type="NCBI Taxonomy" id="9606"/>
</organismHost>
<reference key="1">
    <citation type="journal article" date="1980" name="Nucleic Acids Res.">
        <title>Nucleotide sequence of the EcoRI D fragment of adenovirus 2 genome.</title>
        <authorList>
            <person name="Herisse J."/>
            <person name="Courtois G."/>
            <person name="Galibert F."/>
        </authorList>
    </citation>
    <scope>NUCLEOTIDE SEQUENCE [GENOMIC DNA]</scope>
</reference>
<reference key="2">
    <citation type="journal article" date="1985" name="J. Biol. Chem.">
        <title>The 19-kDa glycoprotein coded by region E3 of adenovirus. Purification, characterization, and structural analysis.</title>
        <authorList>
            <person name="Wold W.S.M."/>
            <person name="Cladaras C."/>
            <person name="Deutscher S.L."/>
            <person name="Kapoor Q.S."/>
        </authorList>
    </citation>
    <scope>PROTEIN SEQUENCE OF N-TERMINUS</scope>
    <scope>GLYCOSYLATION</scope>
</reference>
<reference key="3">
    <citation type="journal article" date="1990" name="EMBO J.">
        <title>Identification of a consensus motif for retention of transmembrane proteins in the endoplasmic reticulum.</title>
        <authorList>
            <person name="Jackson M.R."/>
            <person name="Nilsson T."/>
            <person name="Peterson P.A."/>
        </authorList>
    </citation>
    <scope>DI-LYSINE MOTIF</scope>
</reference>
<reference key="4">
    <citation type="journal article" date="1994" name="J. Virol.">
        <title>Conserved cysteine residues within the E3/19K protein of adenovirus type 2 are essential for binding to major histocompatibility complex antigens.</title>
        <authorList>
            <person name="Sester M."/>
            <person name="Burgert H.-G."/>
        </authorList>
    </citation>
    <scope>DISULFIDE BONDS</scope>
    <scope>MUTAGENESIS OF CYS-28; CYS-39; CYS-45; CYS-100; CYS-118; CYS-126 AND CYS-139</scope>
</reference>
<feature type="signal peptide" evidence="3">
    <location>
        <begin position="1"/>
        <end position="17"/>
    </location>
</feature>
<feature type="chain" id="PRO_0000036482" description="Early E3 18.5 kDa glycoprotein">
    <location>
        <begin position="18"/>
        <end position="159"/>
    </location>
</feature>
<feature type="topological domain" description="Lumenal" evidence="2">
    <location>
        <begin position="18"/>
        <end position="123"/>
    </location>
</feature>
<feature type="transmembrane region" description="Helical" evidence="2">
    <location>
        <begin position="124"/>
        <end position="144"/>
    </location>
</feature>
<feature type="topological domain" description="Cytoplasmic" evidence="2">
    <location>
        <begin position="145"/>
        <end position="159"/>
    </location>
</feature>
<feature type="short sequence motif" description="Di-lysine motif">
    <location>
        <begin position="156"/>
        <end position="159"/>
    </location>
</feature>
<feature type="glycosylation site" description="N-linked (GlcNAc...) asparagine; by host" evidence="2">
    <location>
        <position position="29"/>
    </location>
</feature>
<feature type="glycosylation site" description="N-linked (GlcNAc...) asparagine; by host" evidence="2">
    <location>
        <position position="78"/>
    </location>
</feature>
<feature type="disulfide bond" evidence="4">
    <location>
        <begin position="28"/>
        <end position="45"/>
    </location>
</feature>
<feature type="disulfide bond" evidence="4">
    <location>
        <begin position="39"/>
        <end position="100"/>
    </location>
</feature>
<feature type="mutagenesis site" description="Complete loss of binding to Tw1.3 epitope." evidence="4">
    <original>C</original>
    <variation>S</variation>
    <location>
        <position position="28"/>
    </location>
</feature>
<feature type="mutagenesis site" description="60% loss of binding to Tw1.3 epitope." evidence="4">
    <original>C</original>
    <variation>A</variation>
    <variation>S</variation>
    <location>
        <position position="39"/>
    </location>
</feature>
<feature type="mutagenesis site" description="Complete loss of binding to Tw1.3 epitope." evidence="4">
    <original>C</original>
    <variation>S</variation>
    <location>
        <position position="45"/>
    </location>
</feature>
<feature type="mutagenesis site" description="60% loss of binding to Tw1.3 epitope." evidence="4">
    <original>C</original>
    <variation>S</variation>
    <location>
        <position position="100"/>
    </location>
</feature>
<feature type="mutagenesis site" description="No effect." evidence="4">
    <original>C</original>
    <variation>S</variation>
    <location>
        <position position="118"/>
    </location>
</feature>
<feature type="mutagenesis site" description="No effect." evidence="4">
    <original>C</original>
    <variation>S</variation>
    <location>
        <position position="126"/>
    </location>
</feature>
<feature type="mutagenesis site" description="No effect." evidence="4">
    <original>C</original>
    <variation>S</variation>
    <location>
        <position position="139"/>
    </location>
</feature>
<organism>
    <name type="scientific">Human adenovirus C serotype 2</name>
    <name type="common">HAdV-2</name>
    <name type="synonym">Human adenovirus 2</name>
    <dbReference type="NCBI Taxonomy" id="10515"/>
    <lineage>
        <taxon>Viruses</taxon>
        <taxon>Varidnaviria</taxon>
        <taxon>Bamfordvirae</taxon>
        <taxon>Preplasmiviricota</taxon>
        <taxon>Tectiliviricetes</taxon>
        <taxon>Rowavirales</taxon>
        <taxon>Adenoviridae</taxon>
        <taxon>Mastadenovirus</taxon>
        <taxon>Human mastadenovirus C</taxon>
    </lineage>
</organism>
<name>E3GL_ADE02</name>
<sequence>MRYMILGLLALAAVCSAAKKVEFKEPACNVTFKSEANECTTLIKCTTEHEKLIIRHKDKIGKYAVYAIWQPGDTNDYNVTVFQGENRKTFMYKFPFYEMCDITMYMSKQYKLWPPQKCLENTGTFCSTALLITALALVCTLLYLKYKSRRSFIDEKKMP</sequence>
<proteinExistence type="evidence at protein level"/>
<keyword id="KW-0903">Direct protein sequencing</keyword>
<keyword id="KW-1015">Disulfide bond</keyword>
<keyword id="KW-0244">Early protein</keyword>
<keyword id="KW-0325">Glycoprotein</keyword>
<keyword id="KW-1038">Host endoplasmic reticulum</keyword>
<keyword id="KW-1043">Host membrane</keyword>
<keyword id="KW-0945">Host-virus interaction</keyword>
<keyword id="KW-1080">Inhibition of host adaptive immune response by virus</keyword>
<keyword id="KW-1108">Inhibition of host tapasin by virus</keyword>
<keyword id="KW-0430">Lectin</keyword>
<keyword id="KW-0465">Mannose-binding</keyword>
<keyword id="KW-0472">Membrane</keyword>
<keyword id="KW-1185">Reference proteome</keyword>
<keyword id="KW-0732">Signal</keyword>
<keyword id="KW-0812">Transmembrane</keyword>
<keyword id="KW-1133">Transmembrane helix</keyword>
<keyword id="KW-0899">Viral immunoevasion</keyword>